<evidence type="ECO:0000250" key="1"/>
<evidence type="ECO:0000305" key="2"/>
<evidence type="ECO:0007829" key="3">
    <source>
        <dbReference type="PDB" id="5Y8L"/>
    </source>
</evidence>
<dbReference type="EC" id="1.1.1.31"/>
<dbReference type="EMBL" id="AL123456">
    <property type="protein sequence ID" value="CCP43497.1"/>
    <property type="molecule type" value="Genomic_DNA"/>
</dbReference>
<dbReference type="PIR" id="B70825">
    <property type="entry name" value="B70825"/>
</dbReference>
<dbReference type="RefSeq" id="NP_215265.1">
    <property type="nucleotide sequence ID" value="NC_000962.3"/>
</dbReference>
<dbReference type="RefSeq" id="WP_003403844.1">
    <property type="nucleotide sequence ID" value="NZ_NVQJ01000035.1"/>
</dbReference>
<dbReference type="PDB" id="5Y8G">
    <property type="method" value="X-ray"/>
    <property type="resolution" value="2.01 A"/>
    <property type="chains" value="A/B=1-294"/>
</dbReference>
<dbReference type="PDB" id="5Y8H">
    <property type="method" value="X-ray"/>
    <property type="resolution" value="2.10 A"/>
    <property type="chains" value="A/B=1-294"/>
</dbReference>
<dbReference type="PDB" id="5Y8I">
    <property type="method" value="X-ray"/>
    <property type="resolution" value="2.04 A"/>
    <property type="chains" value="A/B=1-294"/>
</dbReference>
<dbReference type="PDB" id="5Y8J">
    <property type="method" value="X-ray"/>
    <property type="resolution" value="1.86 A"/>
    <property type="chains" value="A/B=1-294"/>
</dbReference>
<dbReference type="PDB" id="5Y8K">
    <property type="method" value="X-ray"/>
    <property type="resolution" value="2.04 A"/>
    <property type="chains" value="A/B=1-294"/>
</dbReference>
<dbReference type="PDB" id="5Y8L">
    <property type="method" value="X-ray"/>
    <property type="resolution" value="1.85 A"/>
    <property type="chains" value="A/B=1-294"/>
</dbReference>
<dbReference type="PDB" id="5Y8M">
    <property type="method" value="X-ray"/>
    <property type="resolution" value="2.04 A"/>
    <property type="chains" value="A/B=1-294"/>
</dbReference>
<dbReference type="PDB" id="5Y8N">
    <property type="method" value="X-ray"/>
    <property type="resolution" value="2.68 A"/>
    <property type="chains" value="A/B=1-294"/>
</dbReference>
<dbReference type="PDB" id="5Y8O">
    <property type="method" value="X-ray"/>
    <property type="resolution" value="2.05 A"/>
    <property type="chains" value="A/B=1-294"/>
</dbReference>
<dbReference type="PDB" id="5Y8P">
    <property type="method" value="X-ray"/>
    <property type="resolution" value="2.15 A"/>
    <property type="chains" value="A/B=1-294"/>
</dbReference>
<dbReference type="PDBsum" id="5Y8G"/>
<dbReference type="PDBsum" id="5Y8H"/>
<dbReference type="PDBsum" id="5Y8I"/>
<dbReference type="PDBsum" id="5Y8J"/>
<dbReference type="PDBsum" id="5Y8K"/>
<dbReference type="PDBsum" id="5Y8L"/>
<dbReference type="PDBsum" id="5Y8M"/>
<dbReference type="PDBsum" id="5Y8N"/>
<dbReference type="PDBsum" id="5Y8O"/>
<dbReference type="PDBsum" id="5Y8P"/>
<dbReference type="SMR" id="P9WNY5"/>
<dbReference type="FunCoup" id="P9WNY5">
    <property type="interactions" value="404"/>
</dbReference>
<dbReference type="STRING" id="83332.Rv0751c"/>
<dbReference type="PaxDb" id="83332-Rv0751c"/>
<dbReference type="GeneID" id="45424715"/>
<dbReference type="GeneID" id="888658"/>
<dbReference type="KEGG" id="mtu:Rv0751c"/>
<dbReference type="KEGG" id="mtv:RVBD_0751c"/>
<dbReference type="TubercuList" id="Rv0751c"/>
<dbReference type="eggNOG" id="COG2084">
    <property type="taxonomic scope" value="Bacteria"/>
</dbReference>
<dbReference type="InParanoid" id="P9WNY5"/>
<dbReference type="OrthoDB" id="3185659at2"/>
<dbReference type="PhylomeDB" id="P9WNY5"/>
<dbReference type="BRENDA" id="1.1.1.31">
    <property type="organism ID" value="3445"/>
</dbReference>
<dbReference type="UniPathway" id="UPA00362"/>
<dbReference type="Proteomes" id="UP000001584">
    <property type="component" value="Chromosome"/>
</dbReference>
<dbReference type="GO" id="GO:0008442">
    <property type="term" value="F:3-hydroxyisobutyrate dehydrogenase activity"/>
    <property type="evidence" value="ECO:0007669"/>
    <property type="project" value="UniProtKB-EC"/>
</dbReference>
<dbReference type="GO" id="GO:0051287">
    <property type="term" value="F:NAD binding"/>
    <property type="evidence" value="ECO:0007669"/>
    <property type="project" value="InterPro"/>
</dbReference>
<dbReference type="GO" id="GO:0050661">
    <property type="term" value="F:NADP binding"/>
    <property type="evidence" value="ECO:0007669"/>
    <property type="project" value="InterPro"/>
</dbReference>
<dbReference type="GO" id="GO:0016616">
    <property type="term" value="F:oxidoreductase activity, acting on the CH-OH group of donors, NAD or NADP as acceptor"/>
    <property type="evidence" value="ECO:0000318"/>
    <property type="project" value="GO_Central"/>
</dbReference>
<dbReference type="GO" id="GO:0006574">
    <property type="term" value="P:valine catabolic process"/>
    <property type="evidence" value="ECO:0007669"/>
    <property type="project" value="UniProtKB-UniPathway"/>
</dbReference>
<dbReference type="FunFam" id="1.10.1040.10:FF:000006">
    <property type="entry name" value="3-hydroxyisobutyrate dehydrogenase"/>
    <property type="match status" value="1"/>
</dbReference>
<dbReference type="Gene3D" id="1.10.1040.10">
    <property type="entry name" value="N-(1-d-carboxylethyl)-l-norvaline Dehydrogenase, domain 2"/>
    <property type="match status" value="1"/>
</dbReference>
<dbReference type="Gene3D" id="3.40.50.720">
    <property type="entry name" value="NAD(P)-binding Rossmann-like Domain"/>
    <property type="match status" value="1"/>
</dbReference>
<dbReference type="InterPro" id="IPR002204">
    <property type="entry name" value="3-OH-isobutyrate_DH-rel_CS"/>
</dbReference>
<dbReference type="InterPro" id="IPR008927">
    <property type="entry name" value="6-PGluconate_DH-like_C_sf"/>
</dbReference>
<dbReference type="InterPro" id="IPR013328">
    <property type="entry name" value="6PGD_dom2"/>
</dbReference>
<dbReference type="InterPro" id="IPR006115">
    <property type="entry name" value="6PGDH_NADP-bd"/>
</dbReference>
<dbReference type="InterPro" id="IPR011548">
    <property type="entry name" value="HIBADH"/>
</dbReference>
<dbReference type="InterPro" id="IPR029154">
    <property type="entry name" value="HIBADH-like_NADP-bd"/>
</dbReference>
<dbReference type="InterPro" id="IPR015815">
    <property type="entry name" value="HIBADH-related"/>
</dbReference>
<dbReference type="InterPro" id="IPR036291">
    <property type="entry name" value="NAD(P)-bd_dom_sf"/>
</dbReference>
<dbReference type="NCBIfam" id="TIGR01692">
    <property type="entry name" value="HIBADH"/>
    <property type="match status" value="1"/>
</dbReference>
<dbReference type="PANTHER" id="PTHR22981:SF7">
    <property type="entry name" value="3-HYDROXYISOBUTYRATE DEHYDROGENASE, MITOCHONDRIAL"/>
    <property type="match status" value="1"/>
</dbReference>
<dbReference type="PANTHER" id="PTHR22981">
    <property type="entry name" value="3-HYDROXYISOBUTYRATE DEHYDROGENASE-RELATED"/>
    <property type="match status" value="1"/>
</dbReference>
<dbReference type="Pfam" id="PF14833">
    <property type="entry name" value="NAD_binding_11"/>
    <property type="match status" value="1"/>
</dbReference>
<dbReference type="Pfam" id="PF03446">
    <property type="entry name" value="NAD_binding_2"/>
    <property type="match status" value="1"/>
</dbReference>
<dbReference type="PIRSF" id="PIRSF000103">
    <property type="entry name" value="HIBADH"/>
    <property type="match status" value="1"/>
</dbReference>
<dbReference type="SUPFAM" id="SSF48179">
    <property type="entry name" value="6-phosphogluconate dehydrogenase C-terminal domain-like"/>
    <property type="match status" value="1"/>
</dbReference>
<dbReference type="SUPFAM" id="SSF51735">
    <property type="entry name" value="NAD(P)-binding Rossmann-fold domains"/>
    <property type="match status" value="1"/>
</dbReference>
<dbReference type="PROSITE" id="PS00895">
    <property type="entry name" value="3_HYDROXYISOBUT_DH"/>
    <property type="match status" value="1"/>
</dbReference>
<comment type="catalytic activity">
    <reaction>
        <text>3-hydroxy-2-methylpropanoate + NAD(+) = 2-methyl-3-oxopropanoate + NADH + H(+)</text>
        <dbReference type="Rhea" id="RHEA:17681"/>
        <dbReference type="ChEBI" id="CHEBI:11805"/>
        <dbReference type="ChEBI" id="CHEBI:15378"/>
        <dbReference type="ChEBI" id="CHEBI:57540"/>
        <dbReference type="ChEBI" id="CHEBI:57700"/>
        <dbReference type="ChEBI" id="CHEBI:57945"/>
        <dbReference type="EC" id="1.1.1.31"/>
    </reaction>
</comment>
<comment type="pathway">
    <text>Amino-acid degradation; L-valine degradation.</text>
</comment>
<comment type="similarity">
    <text evidence="2">Belongs to the HIBADH-related family.</text>
</comment>
<feature type="chain" id="PRO_0000173056" description="Probable 3-hydroxyisobutyrate dehydrogenase">
    <location>
        <begin position="1"/>
        <end position="294"/>
    </location>
</feature>
<feature type="active site" evidence="1">
    <location>
        <position position="168"/>
    </location>
</feature>
<feature type="binding site" evidence="1">
    <location>
        <begin position="3"/>
        <end position="31"/>
    </location>
    <ligand>
        <name>NAD(+)</name>
        <dbReference type="ChEBI" id="CHEBI:57540"/>
    </ligand>
</feature>
<feature type="binding site" evidence="1">
    <location>
        <position position="93"/>
    </location>
    <ligand>
        <name>NAD(+)</name>
        <dbReference type="ChEBI" id="CHEBI:57540"/>
    </ligand>
</feature>
<feature type="binding site" evidence="1">
    <location>
        <position position="243"/>
    </location>
    <ligand>
        <name>NAD(+)</name>
        <dbReference type="ChEBI" id="CHEBI:57540"/>
    </ligand>
</feature>
<feature type="strand" evidence="3">
    <location>
        <begin position="3"/>
        <end position="7"/>
    </location>
</feature>
<feature type="helix" evidence="3">
    <location>
        <begin position="13"/>
        <end position="22"/>
    </location>
</feature>
<feature type="strand" evidence="3">
    <location>
        <begin position="26"/>
        <end position="30"/>
    </location>
</feature>
<feature type="helix" evidence="3">
    <location>
        <begin position="34"/>
        <end position="41"/>
    </location>
</feature>
<feature type="turn" evidence="3">
    <location>
        <begin position="42"/>
        <end position="44"/>
    </location>
</feature>
<feature type="helix" evidence="3">
    <location>
        <begin position="51"/>
        <end position="55"/>
    </location>
</feature>
<feature type="strand" evidence="3">
    <location>
        <begin position="59"/>
        <end position="63"/>
    </location>
</feature>
<feature type="helix" evidence="3">
    <location>
        <begin position="68"/>
        <end position="78"/>
    </location>
</feature>
<feature type="helix" evidence="3">
    <location>
        <begin position="79"/>
        <end position="81"/>
    </location>
</feature>
<feature type="strand" evidence="3">
    <location>
        <begin position="87"/>
        <end position="90"/>
    </location>
</feature>
<feature type="helix" evidence="3">
    <location>
        <begin position="96"/>
        <end position="108"/>
    </location>
</feature>
<feature type="strand" evidence="3">
    <location>
        <begin position="112"/>
        <end position="115"/>
    </location>
</feature>
<feature type="strand" evidence="3">
    <location>
        <begin position="118"/>
        <end position="120"/>
    </location>
</feature>
<feature type="helix" evidence="3">
    <location>
        <begin position="121"/>
        <end position="126"/>
    </location>
</feature>
<feature type="strand" evidence="3">
    <location>
        <begin position="130"/>
        <end position="136"/>
    </location>
</feature>
<feature type="helix" evidence="3">
    <location>
        <begin position="138"/>
        <end position="148"/>
    </location>
</feature>
<feature type="helix" evidence="3">
    <location>
        <begin position="149"/>
        <end position="151"/>
    </location>
</feature>
<feature type="strand" evidence="3">
    <location>
        <begin position="152"/>
        <end position="160"/>
    </location>
</feature>
<feature type="helix" evidence="3">
    <location>
        <begin position="163"/>
        <end position="191"/>
    </location>
</feature>
<feature type="helix" evidence="3">
    <location>
        <begin position="196"/>
        <end position="204"/>
    </location>
</feature>
<feature type="helix" evidence="3">
    <location>
        <begin position="211"/>
        <end position="214"/>
    </location>
</feature>
<feature type="strand" evidence="3">
    <location>
        <begin position="218"/>
        <end position="223"/>
    </location>
</feature>
<feature type="helix" evidence="3">
    <location>
        <begin position="227"/>
        <end position="229"/>
    </location>
</feature>
<feature type="turn" evidence="3">
    <location>
        <begin position="230"/>
        <end position="232"/>
    </location>
</feature>
<feature type="strand" evidence="3">
    <location>
        <begin position="235"/>
        <end position="237"/>
    </location>
</feature>
<feature type="helix" evidence="3">
    <location>
        <begin position="238"/>
        <end position="255"/>
    </location>
</feature>
<feature type="helix" evidence="3">
    <location>
        <begin position="260"/>
        <end position="276"/>
    </location>
</feature>
<feature type="helix" evidence="3">
    <location>
        <begin position="281"/>
        <end position="290"/>
    </location>
</feature>
<keyword id="KW-0002">3D-structure</keyword>
<keyword id="KW-0101">Branched-chain amino acid catabolism</keyword>
<keyword id="KW-0520">NAD</keyword>
<keyword id="KW-0560">Oxidoreductase</keyword>
<keyword id="KW-1185">Reference proteome</keyword>
<protein>
    <recommendedName>
        <fullName>Probable 3-hydroxyisobutyrate dehydrogenase</fullName>
        <shortName>HIBADH</shortName>
        <ecNumber>1.1.1.31</ecNumber>
    </recommendedName>
</protein>
<proteinExistence type="evidence at protein level"/>
<accession>P9WNY5</accession>
<accession>L0T7L8</accession>
<accession>O53814</accession>
<accession>P63935</accession>
<name>MMSB_MYCTU</name>
<sequence>MTTIAFLGLGNMGAPMSANLVGAGHVVRGFDPAPTAASGAAAHGVAVFRSAPEAVAEADVVITMLPTGEVVRRCYTDVLAAARPATLFIDSSTISVTDAREVHALAESHGMLQLDAPVSGGVKGAAAATLAFMVGGDESTLRRARPVLEPMAGKIIHCGAAGAGQAAKVCNNMVLAVQQIAIAEAFVLAEKLGLSAQSLFDVITGATGNCWAVHTNCPVPGPVPTSPANNDFKPGFSTALMNKDLGLAMDAVAATGATAPLGSHAADIYAKFAADHADLDFSAVIHTLRARADA</sequence>
<organism>
    <name type="scientific">Mycobacterium tuberculosis (strain ATCC 25618 / H37Rv)</name>
    <dbReference type="NCBI Taxonomy" id="83332"/>
    <lineage>
        <taxon>Bacteria</taxon>
        <taxon>Bacillati</taxon>
        <taxon>Actinomycetota</taxon>
        <taxon>Actinomycetes</taxon>
        <taxon>Mycobacteriales</taxon>
        <taxon>Mycobacteriaceae</taxon>
        <taxon>Mycobacterium</taxon>
        <taxon>Mycobacterium tuberculosis complex</taxon>
    </lineage>
</organism>
<reference key="1">
    <citation type="journal article" date="1998" name="Nature">
        <title>Deciphering the biology of Mycobacterium tuberculosis from the complete genome sequence.</title>
        <authorList>
            <person name="Cole S.T."/>
            <person name="Brosch R."/>
            <person name="Parkhill J."/>
            <person name="Garnier T."/>
            <person name="Churcher C.M."/>
            <person name="Harris D.E."/>
            <person name="Gordon S.V."/>
            <person name="Eiglmeier K."/>
            <person name="Gas S."/>
            <person name="Barry C.E. III"/>
            <person name="Tekaia F."/>
            <person name="Badcock K."/>
            <person name="Basham D."/>
            <person name="Brown D."/>
            <person name="Chillingworth T."/>
            <person name="Connor R."/>
            <person name="Davies R.M."/>
            <person name="Devlin K."/>
            <person name="Feltwell T."/>
            <person name="Gentles S."/>
            <person name="Hamlin N."/>
            <person name="Holroyd S."/>
            <person name="Hornsby T."/>
            <person name="Jagels K."/>
            <person name="Krogh A."/>
            <person name="McLean J."/>
            <person name="Moule S."/>
            <person name="Murphy L.D."/>
            <person name="Oliver S."/>
            <person name="Osborne J."/>
            <person name="Quail M.A."/>
            <person name="Rajandream M.A."/>
            <person name="Rogers J."/>
            <person name="Rutter S."/>
            <person name="Seeger K."/>
            <person name="Skelton S."/>
            <person name="Squares S."/>
            <person name="Squares R."/>
            <person name="Sulston J.E."/>
            <person name="Taylor K."/>
            <person name="Whitehead S."/>
            <person name="Barrell B.G."/>
        </authorList>
    </citation>
    <scope>NUCLEOTIDE SEQUENCE [LARGE SCALE GENOMIC DNA]</scope>
    <source>
        <strain>ATCC 25618 / H37Rv</strain>
    </source>
</reference>
<reference key="2">
    <citation type="journal article" date="2011" name="Mol. Cell. Proteomics">
        <title>Proteogenomic analysis of Mycobacterium tuberculosis by high resolution mass spectrometry.</title>
        <authorList>
            <person name="Kelkar D.S."/>
            <person name="Kumar D."/>
            <person name="Kumar P."/>
            <person name="Balakrishnan L."/>
            <person name="Muthusamy B."/>
            <person name="Yadav A.K."/>
            <person name="Shrivastava P."/>
            <person name="Marimuthu A."/>
            <person name="Anand S."/>
            <person name="Sundaram H."/>
            <person name="Kingsbury R."/>
            <person name="Harsha H.C."/>
            <person name="Nair B."/>
            <person name="Prasad T.S."/>
            <person name="Chauhan D.S."/>
            <person name="Katoch K."/>
            <person name="Katoch V.M."/>
            <person name="Kumar P."/>
            <person name="Chaerkady R."/>
            <person name="Ramachandran S."/>
            <person name="Dash D."/>
            <person name="Pandey A."/>
        </authorList>
    </citation>
    <scope>IDENTIFICATION BY MASS SPECTROMETRY [LARGE SCALE ANALYSIS]</scope>
    <source>
        <strain>ATCC 25618 / H37Rv</strain>
    </source>
</reference>
<gene>
    <name type="primary">mmsB</name>
    <name type="ordered locus">Rv0751c</name>
    <name type="ORF">MTV041.25c</name>
</gene>